<feature type="chain" id="PRO_0000336139" description="UPF0102 protein Bamb_0202">
    <location>
        <begin position="1"/>
        <end position="142"/>
    </location>
</feature>
<feature type="region of interest" description="Disordered" evidence="2">
    <location>
        <begin position="1"/>
        <end position="23"/>
    </location>
</feature>
<evidence type="ECO:0000255" key="1">
    <source>
        <dbReference type="HAMAP-Rule" id="MF_00048"/>
    </source>
</evidence>
<evidence type="ECO:0000256" key="2">
    <source>
        <dbReference type="SAM" id="MobiDB-lite"/>
    </source>
</evidence>
<dbReference type="EMBL" id="CP000440">
    <property type="protein sequence ID" value="ABI85763.1"/>
    <property type="molecule type" value="Genomic_DNA"/>
</dbReference>
<dbReference type="SMR" id="Q0BJB0"/>
<dbReference type="KEGG" id="bam:Bamb_0202"/>
<dbReference type="PATRIC" id="fig|339670.21.peg.1423"/>
<dbReference type="eggNOG" id="COG0792">
    <property type="taxonomic scope" value="Bacteria"/>
</dbReference>
<dbReference type="Proteomes" id="UP000000662">
    <property type="component" value="Chromosome 1"/>
</dbReference>
<dbReference type="GO" id="GO:0003676">
    <property type="term" value="F:nucleic acid binding"/>
    <property type="evidence" value="ECO:0007669"/>
    <property type="project" value="InterPro"/>
</dbReference>
<dbReference type="CDD" id="cd20736">
    <property type="entry name" value="PoNe_Nuclease"/>
    <property type="match status" value="1"/>
</dbReference>
<dbReference type="Gene3D" id="3.40.1350.10">
    <property type="match status" value="1"/>
</dbReference>
<dbReference type="HAMAP" id="MF_00048">
    <property type="entry name" value="UPF0102"/>
    <property type="match status" value="1"/>
</dbReference>
<dbReference type="InterPro" id="IPR011335">
    <property type="entry name" value="Restrct_endonuc-II-like"/>
</dbReference>
<dbReference type="InterPro" id="IPR011856">
    <property type="entry name" value="tRNA_endonuc-like_dom_sf"/>
</dbReference>
<dbReference type="InterPro" id="IPR003509">
    <property type="entry name" value="UPF0102_YraN-like"/>
</dbReference>
<dbReference type="NCBIfam" id="NF009150">
    <property type="entry name" value="PRK12497.1-3"/>
    <property type="match status" value="1"/>
</dbReference>
<dbReference type="NCBIfam" id="TIGR00252">
    <property type="entry name" value="YraN family protein"/>
    <property type="match status" value="1"/>
</dbReference>
<dbReference type="PANTHER" id="PTHR34039">
    <property type="entry name" value="UPF0102 PROTEIN YRAN"/>
    <property type="match status" value="1"/>
</dbReference>
<dbReference type="PANTHER" id="PTHR34039:SF1">
    <property type="entry name" value="UPF0102 PROTEIN YRAN"/>
    <property type="match status" value="1"/>
</dbReference>
<dbReference type="Pfam" id="PF02021">
    <property type="entry name" value="UPF0102"/>
    <property type="match status" value="1"/>
</dbReference>
<dbReference type="SUPFAM" id="SSF52980">
    <property type="entry name" value="Restriction endonuclease-like"/>
    <property type="match status" value="1"/>
</dbReference>
<reference key="1">
    <citation type="submission" date="2006-08" db="EMBL/GenBank/DDBJ databases">
        <title>Complete sequence of chromosome 1 of Burkholderia cepacia AMMD.</title>
        <authorList>
            <person name="Copeland A."/>
            <person name="Lucas S."/>
            <person name="Lapidus A."/>
            <person name="Barry K."/>
            <person name="Detter J.C."/>
            <person name="Glavina del Rio T."/>
            <person name="Hammon N."/>
            <person name="Israni S."/>
            <person name="Pitluck S."/>
            <person name="Bruce D."/>
            <person name="Chain P."/>
            <person name="Malfatti S."/>
            <person name="Shin M."/>
            <person name="Vergez L."/>
            <person name="Schmutz J."/>
            <person name="Larimer F."/>
            <person name="Land M."/>
            <person name="Hauser L."/>
            <person name="Kyrpides N."/>
            <person name="Kim E."/>
            <person name="Parke J."/>
            <person name="Coenye T."/>
            <person name="Konstantinidis K."/>
            <person name="Ramette A."/>
            <person name="Tiedje J."/>
            <person name="Richardson P."/>
        </authorList>
    </citation>
    <scope>NUCLEOTIDE SEQUENCE [LARGE SCALE GENOMIC DNA]</scope>
    <source>
        <strain>ATCC BAA-244 / DSM 16087 / CCUG 44356 / LMG 19182 / AMMD</strain>
    </source>
</reference>
<gene>
    <name type="ordered locus">Bamb_0202</name>
</gene>
<sequence>MCHAAPAAPASGRGLPHGGGNFSGAAGSRSVGATFEQRARQFLERRGLAFVAANVTMRGGELDLVMRTPDGTLVFVEVRARRSTRHGGAAASVGWRKRRRLVKAALHFWVRHGKGAACRFDVVAFEAGRLEWLHDAFRADDV</sequence>
<name>Y202_BURCM</name>
<protein>
    <recommendedName>
        <fullName evidence="1">UPF0102 protein Bamb_0202</fullName>
    </recommendedName>
</protein>
<accession>Q0BJB0</accession>
<proteinExistence type="inferred from homology"/>
<organism>
    <name type="scientific">Burkholderia ambifaria (strain ATCC BAA-244 / DSM 16087 / CCUG 44356 / LMG 19182 / AMMD)</name>
    <name type="common">Burkholderia cepacia (strain AMMD)</name>
    <dbReference type="NCBI Taxonomy" id="339670"/>
    <lineage>
        <taxon>Bacteria</taxon>
        <taxon>Pseudomonadati</taxon>
        <taxon>Pseudomonadota</taxon>
        <taxon>Betaproteobacteria</taxon>
        <taxon>Burkholderiales</taxon>
        <taxon>Burkholderiaceae</taxon>
        <taxon>Burkholderia</taxon>
        <taxon>Burkholderia cepacia complex</taxon>
    </lineage>
</organism>
<comment type="similarity">
    <text evidence="1">Belongs to the UPF0102 family.</text>
</comment>